<comment type="function">
    <text evidence="1">Binds directly to 16S ribosomal RNA.</text>
</comment>
<comment type="similarity">
    <text evidence="1">Belongs to the bacterial ribosomal protein bS20 family.</text>
</comment>
<organism>
    <name type="scientific">Pseudomonas savastanoi pv. phaseolicola (strain 1448A / Race 6)</name>
    <name type="common">Pseudomonas syringae pv. phaseolicola (strain 1448A / Race 6)</name>
    <dbReference type="NCBI Taxonomy" id="264730"/>
    <lineage>
        <taxon>Bacteria</taxon>
        <taxon>Pseudomonadati</taxon>
        <taxon>Pseudomonadota</taxon>
        <taxon>Gammaproteobacteria</taxon>
        <taxon>Pseudomonadales</taxon>
        <taxon>Pseudomonadaceae</taxon>
        <taxon>Pseudomonas</taxon>
    </lineage>
</organism>
<proteinExistence type="inferred from homology"/>
<sequence>MANTPSAKKRAKQAEKRRSHNASLRSMVRTYIKNVVKAIDAKDAEKAQAAYVLAVPVIDRMADKGIIHKNKAARHKGRLNGHIKALSLAAAA</sequence>
<protein>
    <recommendedName>
        <fullName evidence="1">Small ribosomal subunit protein bS20</fullName>
    </recommendedName>
    <alternativeName>
        <fullName evidence="3">30S ribosomal protein S20</fullName>
    </alternativeName>
</protein>
<reference key="1">
    <citation type="journal article" date="2005" name="J. Bacteriol.">
        <title>Whole-genome sequence analysis of Pseudomonas syringae pv. phaseolicola 1448A reveals divergence among pathovars in genes involved in virulence and transposition.</title>
        <authorList>
            <person name="Joardar V."/>
            <person name="Lindeberg M."/>
            <person name="Jackson R.W."/>
            <person name="Selengut J."/>
            <person name="Dodson R."/>
            <person name="Brinkac L.M."/>
            <person name="Daugherty S.C."/>
            <person name="DeBoy R.T."/>
            <person name="Durkin A.S."/>
            <person name="Gwinn Giglio M."/>
            <person name="Madupu R."/>
            <person name="Nelson W.C."/>
            <person name="Rosovitz M.J."/>
            <person name="Sullivan S.A."/>
            <person name="Crabtree J."/>
            <person name="Creasy T."/>
            <person name="Davidsen T.M."/>
            <person name="Haft D.H."/>
            <person name="Zafar N."/>
            <person name="Zhou L."/>
            <person name="Halpin R."/>
            <person name="Holley T."/>
            <person name="Khouri H.M."/>
            <person name="Feldblyum T.V."/>
            <person name="White O."/>
            <person name="Fraser C.M."/>
            <person name="Chatterjee A.K."/>
            <person name="Cartinhour S."/>
            <person name="Schneider D."/>
            <person name="Mansfield J.W."/>
            <person name="Collmer A."/>
            <person name="Buell R."/>
        </authorList>
    </citation>
    <scope>NUCLEOTIDE SEQUENCE [LARGE SCALE GENOMIC DNA]</scope>
    <source>
        <strain>1448A / Race 6</strain>
    </source>
</reference>
<name>RS20_PSE14</name>
<dbReference type="EMBL" id="CP000058">
    <property type="protein sequence ID" value="AAZ35333.1"/>
    <property type="molecule type" value="Genomic_DNA"/>
</dbReference>
<dbReference type="RefSeq" id="WP_003344603.1">
    <property type="nucleotide sequence ID" value="NC_005773.3"/>
</dbReference>
<dbReference type="SMR" id="Q48NK9"/>
<dbReference type="GeneID" id="96217048"/>
<dbReference type="KEGG" id="psp:PSPPH_0718"/>
<dbReference type="eggNOG" id="COG0268">
    <property type="taxonomic scope" value="Bacteria"/>
</dbReference>
<dbReference type="HOGENOM" id="CLU_160655_4_0_6"/>
<dbReference type="Proteomes" id="UP000000551">
    <property type="component" value="Chromosome"/>
</dbReference>
<dbReference type="GO" id="GO:0005829">
    <property type="term" value="C:cytosol"/>
    <property type="evidence" value="ECO:0007669"/>
    <property type="project" value="TreeGrafter"/>
</dbReference>
<dbReference type="GO" id="GO:0015935">
    <property type="term" value="C:small ribosomal subunit"/>
    <property type="evidence" value="ECO:0007669"/>
    <property type="project" value="TreeGrafter"/>
</dbReference>
<dbReference type="GO" id="GO:0070181">
    <property type="term" value="F:small ribosomal subunit rRNA binding"/>
    <property type="evidence" value="ECO:0007669"/>
    <property type="project" value="TreeGrafter"/>
</dbReference>
<dbReference type="GO" id="GO:0003735">
    <property type="term" value="F:structural constituent of ribosome"/>
    <property type="evidence" value="ECO:0007669"/>
    <property type="project" value="InterPro"/>
</dbReference>
<dbReference type="GO" id="GO:0006412">
    <property type="term" value="P:translation"/>
    <property type="evidence" value="ECO:0007669"/>
    <property type="project" value="UniProtKB-UniRule"/>
</dbReference>
<dbReference type="FunFam" id="1.20.58.110:FF:000001">
    <property type="entry name" value="30S ribosomal protein S20"/>
    <property type="match status" value="1"/>
</dbReference>
<dbReference type="Gene3D" id="1.20.58.110">
    <property type="entry name" value="Ribosomal protein S20"/>
    <property type="match status" value="1"/>
</dbReference>
<dbReference type="HAMAP" id="MF_00500">
    <property type="entry name" value="Ribosomal_bS20"/>
    <property type="match status" value="1"/>
</dbReference>
<dbReference type="InterPro" id="IPR002583">
    <property type="entry name" value="Ribosomal_bS20"/>
</dbReference>
<dbReference type="InterPro" id="IPR036510">
    <property type="entry name" value="Ribosomal_bS20_sf"/>
</dbReference>
<dbReference type="NCBIfam" id="TIGR00029">
    <property type="entry name" value="S20"/>
    <property type="match status" value="1"/>
</dbReference>
<dbReference type="PANTHER" id="PTHR33398">
    <property type="entry name" value="30S RIBOSOMAL PROTEIN S20"/>
    <property type="match status" value="1"/>
</dbReference>
<dbReference type="PANTHER" id="PTHR33398:SF1">
    <property type="entry name" value="SMALL RIBOSOMAL SUBUNIT PROTEIN BS20C"/>
    <property type="match status" value="1"/>
</dbReference>
<dbReference type="Pfam" id="PF01649">
    <property type="entry name" value="Ribosomal_S20p"/>
    <property type="match status" value="1"/>
</dbReference>
<dbReference type="SUPFAM" id="SSF46992">
    <property type="entry name" value="Ribosomal protein S20"/>
    <property type="match status" value="1"/>
</dbReference>
<accession>Q48NK9</accession>
<feature type="chain" id="PRO_0000224980" description="Small ribosomal subunit protein bS20">
    <location>
        <begin position="1"/>
        <end position="92"/>
    </location>
</feature>
<feature type="region of interest" description="Disordered" evidence="2">
    <location>
        <begin position="1"/>
        <end position="23"/>
    </location>
</feature>
<feature type="compositionally biased region" description="Basic residues" evidence="2">
    <location>
        <begin position="7"/>
        <end position="20"/>
    </location>
</feature>
<evidence type="ECO:0000255" key="1">
    <source>
        <dbReference type="HAMAP-Rule" id="MF_00500"/>
    </source>
</evidence>
<evidence type="ECO:0000256" key="2">
    <source>
        <dbReference type="SAM" id="MobiDB-lite"/>
    </source>
</evidence>
<evidence type="ECO:0000305" key="3"/>
<keyword id="KW-0687">Ribonucleoprotein</keyword>
<keyword id="KW-0689">Ribosomal protein</keyword>
<keyword id="KW-0694">RNA-binding</keyword>
<keyword id="KW-0699">rRNA-binding</keyword>
<gene>
    <name evidence="1" type="primary">rpsT</name>
    <name type="ordered locus">PSPPH_0718</name>
</gene>